<comment type="function">
    <text evidence="1">Succinyl-CoA synthetase functions in the citric acid cycle (TCA), coupling the hydrolysis of succinyl-CoA to the synthesis of either ATP or GTP and thus represents the only step of substrate-level phosphorylation in the TCA. The beta subunit provides nucleotide specificity of the enzyme and binds the substrate succinate, while the binding sites for coenzyme A and phosphate are found in the alpha subunit.</text>
</comment>
<comment type="catalytic activity">
    <reaction evidence="1">
        <text>succinate + ATP + CoA = succinyl-CoA + ADP + phosphate</text>
        <dbReference type="Rhea" id="RHEA:17661"/>
        <dbReference type="ChEBI" id="CHEBI:30031"/>
        <dbReference type="ChEBI" id="CHEBI:30616"/>
        <dbReference type="ChEBI" id="CHEBI:43474"/>
        <dbReference type="ChEBI" id="CHEBI:57287"/>
        <dbReference type="ChEBI" id="CHEBI:57292"/>
        <dbReference type="ChEBI" id="CHEBI:456216"/>
        <dbReference type="EC" id="6.2.1.5"/>
    </reaction>
    <physiologicalReaction direction="right-to-left" evidence="1">
        <dbReference type="Rhea" id="RHEA:17663"/>
    </physiologicalReaction>
</comment>
<comment type="catalytic activity">
    <reaction evidence="1">
        <text>GTP + succinate + CoA = succinyl-CoA + GDP + phosphate</text>
        <dbReference type="Rhea" id="RHEA:22120"/>
        <dbReference type="ChEBI" id="CHEBI:30031"/>
        <dbReference type="ChEBI" id="CHEBI:37565"/>
        <dbReference type="ChEBI" id="CHEBI:43474"/>
        <dbReference type="ChEBI" id="CHEBI:57287"/>
        <dbReference type="ChEBI" id="CHEBI:57292"/>
        <dbReference type="ChEBI" id="CHEBI:58189"/>
    </reaction>
    <physiologicalReaction direction="right-to-left" evidence="1">
        <dbReference type="Rhea" id="RHEA:22122"/>
    </physiologicalReaction>
</comment>
<comment type="cofactor">
    <cofactor evidence="1">
        <name>Mg(2+)</name>
        <dbReference type="ChEBI" id="CHEBI:18420"/>
    </cofactor>
    <text evidence="1">Binds 1 Mg(2+) ion per subunit.</text>
</comment>
<comment type="pathway">
    <text evidence="1">Carbohydrate metabolism; tricarboxylic acid cycle; succinate from succinyl-CoA (ligase route): step 1/1.</text>
</comment>
<comment type="subunit">
    <text evidence="1">Heterotetramer of two alpha and two beta subunits.</text>
</comment>
<comment type="similarity">
    <text evidence="1">Belongs to the succinate/malate CoA ligase beta subunit family.</text>
</comment>
<dbReference type="EC" id="6.2.1.5" evidence="1"/>
<dbReference type="EMBL" id="CP000685">
    <property type="protein sequence ID" value="ABQ05190.1"/>
    <property type="molecule type" value="Genomic_DNA"/>
</dbReference>
<dbReference type="RefSeq" id="WP_012024229.1">
    <property type="nucleotide sequence ID" value="NZ_MUGZ01000022.1"/>
</dbReference>
<dbReference type="SMR" id="A5FHX8"/>
<dbReference type="STRING" id="376686.Fjoh_2162"/>
<dbReference type="KEGG" id="fjo:Fjoh_2162"/>
<dbReference type="eggNOG" id="COG0045">
    <property type="taxonomic scope" value="Bacteria"/>
</dbReference>
<dbReference type="HOGENOM" id="CLU_037430_0_2_10"/>
<dbReference type="OrthoDB" id="9802602at2"/>
<dbReference type="UniPathway" id="UPA00223">
    <property type="reaction ID" value="UER00999"/>
</dbReference>
<dbReference type="Proteomes" id="UP000006694">
    <property type="component" value="Chromosome"/>
</dbReference>
<dbReference type="GO" id="GO:0005829">
    <property type="term" value="C:cytosol"/>
    <property type="evidence" value="ECO:0007669"/>
    <property type="project" value="TreeGrafter"/>
</dbReference>
<dbReference type="GO" id="GO:0042709">
    <property type="term" value="C:succinate-CoA ligase complex"/>
    <property type="evidence" value="ECO:0007669"/>
    <property type="project" value="TreeGrafter"/>
</dbReference>
<dbReference type="GO" id="GO:0005524">
    <property type="term" value="F:ATP binding"/>
    <property type="evidence" value="ECO:0007669"/>
    <property type="project" value="UniProtKB-UniRule"/>
</dbReference>
<dbReference type="GO" id="GO:0000287">
    <property type="term" value="F:magnesium ion binding"/>
    <property type="evidence" value="ECO:0007669"/>
    <property type="project" value="UniProtKB-UniRule"/>
</dbReference>
<dbReference type="GO" id="GO:0004775">
    <property type="term" value="F:succinate-CoA ligase (ADP-forming) activity"/>
    <property type="evidence" value="ECO:0007669"/>
    <property type="project" value="UniProtKB-UniRule"/>
</dbReference>
<dbReference type="GO" id="GO:0004776">
    <property type="term" value="F:succinate-CoA ligase (GDP-forming) activity"/>
    <property type="evidence" value="ECO:0007669"/>
    <property type="project" value="RHEA"/>
</dbReference>
<dbReference type="GO" id="GO:0006104">
    <property type="term" value="P:succinyl-CoA metabolic process"/>
    <property type="evidence" value="ECO:0007669"/>
    <property type="project" value="TreeGrafter"/>
</dbReference>
<dbReference type="GO" id="GO:0006099">
    <property type="term" value="P:tricarboxylic acid cycle"/>
    <property type="evidence" value="ECO:0007669"/>
    <property type="project" value="UniProtKB-UniRule"/>
</dbReference>
<dbReference type="FunFam" id="3.30.1490.20:FF:000002">
    <property type="entry name" value="Succinate--CoA ligase [ADP-forming] subunit beta"/>
    <property type="match status" value="1"/>
</dbReference>
<dbReference type="FunFam" id="3.30.470.20:FF:000002">
    <property type="entry name" value="Succinate--CoA ligase [ADP-forming] subunit beta"/>
    <property type="match status" value="1"/>
</dbReference>
<dbReference type="FunFam" id="3.40.50.261:FF:000001">
    <property type="entry name" value="Succinate--CoA ligase [ADP-forming] subunit beta"/>
    <property type="match status" value="1"/>
</dbReference>
<dbReference type="Gene3D" id="3.30.1490.20">
    <property type="entry name" value="ATP-grasp fold, A domain"/>
    <property type="match status" value="1"/>
</dbReference>
<dbReference type="Gene3D" id="3.30.470.20">
    <property type="entry name" value="ATP-grasp fold, B domain"/>
    <property type="match status" value="1"/>
</dbReference>
<dbReference type="Gene3D" id="3.40.50.261">
    <property type="entry name" value="Succinyl-CoA synthetase domains"/>
    <property type="match status" value="1"/>
</dbReference>
<dbReference type="HAMAP" id="MF_00558">
    <property type="entry name" value="Succ_CoA_beta"/>
    <property type="match status" value="1"/>
</dbReference>
<dbReference type="InterPro" id="IPR013650">
    <property type="entry name" value="ATP-grasp_succ-CoA_synth-type"/>
</dbReference>
<dbReference type="InterPro" id="IPR013815">
    <property type="entry name" value="ATP_grasp_subdomain_1"/>
</dbReference>
<dbReference type="InterPro" id="IPR005811">
    <property type="entry name" value="SUCC_ACL_C"/>
</dbReference>
<dbReference type="InterPro" id="IPR005809">
    <property type="entry name" value="Succ_CoA_ligase-like_bsu"/>
</dbReference>
<dbReference type="InterPro" id="IPR016102">
    <property type="entry name" value="Succinyl-CoA_synth-like"/>
</dbReference>
<dbReference type="NCBIfam" id="NF001913">
    <property type="entry name" value="PRK00696.1"/>
    <property type="match status" value="1"/>
</dbReference>
<dbReference type="NCBIfam" id="TIGR01016">
    <property type="entry name" value="sucCoAbeta"/>
    <property type="match status" value="1"/>
</dbReference>
<dbReference type="PANTHER" id="PTHR11815:SF10">
    <property type="entry name" value="SUCCINATE--COA LIGASE [GDP-FORMING] SUBUNIT BETA, MITOCHONDRIAL"/>
    <property type="match status" value="1"/>
</dbReference>
<dbReference type="PANTHER" id="PTHR11815">
    <property type="entry name" value="SUCCINYL-COA SYNTHETASE BETA CHAIN"/>
    <property type="match status" value="1"/>
</dbReference>
<dbReference type="Pfam" id="PF08442">
    <property type="entry name" value="ATP-grasp_2"/>
    <property type="match status" value="1"/>
</dbReference>
<dbReference type="Pfam" id="PF00549">
    <property type="entry name" value="Ligase_CoA"/>
    <property type="match status" value="1"/>
</dbReference>
<dbReference type="PIRSF" id="PIRSF001554">
    <property type="entry name" value="SucCS_beta"/>
    <property type="match status" value="1"/>
</dbReference>
<dbReference type="SUPFAM" id="SSF56059">
    <property type="entry name" value="Glutathione synthetase ATP-binding domain-like"/>
    <property type="match status" value="1"/>
</dbReference>
<dbReference type="SUPFAM" id="SSF52210">
    <property type="entry name" value="Succinyl-CoA synthetase domains"/>
    <property type="match status" value="1"/>
</dbReference>
<proteinExistence type="inferred from homology"/>
<feature type="chain" id="PRO_1000082084" description="Succinate--CoA ligase [ADP-forming] subunit beta">
    <location>
        <begin position="1"/>
        <end position="397"/>
    </location>
</feature>
<feature type="domain" description="ATP-grasp" evidence="1">
    <location>
        <begin position="9"/>
        <end position="253"/>
    </location>
</feature>
<feature type="binding site" evidence="1">
    <location>
        <position position="50"/>
    </location>
    <ligand>
        <name>ATP</name>
        <dbReference type="ChEBI" id="CHEBI:30616"/>
    </ligand>
</feature>
<feature type="binding site" evidence="1">
    <location>
        <begin position="57"/>
        <end position="59"/>
    </location>
    <ligand>
        <name>ATP</name>
        <dbReference type="ChEBI" id="CHEBI:30616"/>
    </ligand>
</feature>
<feature type="binding site" evidence="1">
    <location>
        <position position="106"/>
    </location>
    <ligand>
        <name>ATP</name>
        <dbReference type="ChEBI" id="CHEBI:30616"/>
    </ligand>
</feature>
<feature type="binding site" evidence="1">
    <location>
        <position position="116"/>
    </location>
    <ligand>
        <name>ATP</name>
        <dbReference type="ChEBI" id="CHEBI:30616"/>
    </ligand>
</feature>
<feature type="binding site" evidence="1">
    <location>
        <position position="208"/>
    </location>
    <ligand>
        <name>Mg(2+)</name>
        <dbReference type="ChEBI" id="CHEBI:18420"/>
    </ligand>
</feature>
<feature type="binding site" evidence="1">
    <location>
        <position position="222"/>
    </location>
    <ligand>
        <name>Mg(2+)</name>
        <dbReference type="ChEBI" id="CHEBI:18420"/>
    </ligand>
</feature>
<feature type="binding site" evidence="1">
    <location>
        <position position="273"/>
    </location>
    <ligand>
        <name>substrate</name>
        <note>ligand shared with subunit alpha</note>
    </ligand>
</feature>
<feature type="binding site" evidence="1">
    <location>
        <begin position="330"/>
        <end position="332"/>
    </location>
    <ligand>
        <name>substrate</name>
        <note>ligand shared with subunit alpha</note>
    </ligand>
</feature>
<name>SUCC_FLAJ1</name>
<evidence type="ECO:0000255" key="1">
    <source>
        <dbReference type="HAMAP-Rule" id="MF_00558"/>
    </source>
</evidence>
<reference key="1">
    <citation type="journal article" date="2009" name="Appl. Environ. Microbiol.">
        <title>Novel features of the polysaccharide-digesting gliding bacterium Flavobacterium johnsoniae as revealed by genome sequence analysis.</title>
        <authorList>
            <person name="McBride M.J."/>
            <person name="Xie G."/>
            <person name="Martens E.C."/>
            <person name="Lapidus A."/>
            <person name="Henrissat B."/>
            <person name="Rhodes R.G."/>
            <person name="Goltsman E."/>
            <person name="Wang W."/>
            <person name="Xu J."/>
            <person name="Hunnicutt D.W."/>
            <person name="Staroscik A.M."/>
            <person name="Hoover T.R."/>
            <person name="Cheng Y.Q."/>
            <person name="Stein J.L."/>
        </authorList>
    </citation>
    <scope>NUCLEOTIDE SEQUENCE [LARGE SCALE GENOMIC DNA]</scope>
    <source>
        <strain>ATCC 17061 / DSM 2064 / JCM 8514 / BCRC 14874 / CCUG 350202 / NBRC 14942 / NCIMB 11054 / UW101</strain>
    </source>
</reference>
<accession>A5FHX8</accession>
<organism>
    <name type="scientific">Flavobacterium johnsoniae (strain ATCC 17061 / DSM 2064 / JCM 8514 / BCRC 14874 / CCUG 350202 / NBRC 14942 / NCIMB 11054 / UW101)</name>
    <name type="common">Cytophaga johnsonae</name>
    <dbReference type="NCBI Taxonomy" id="376686"/>
    <lineage>
        <taxon>Bacteria</taxon>
        <taxon>Pseudomonadati</taxon>
        <taxon>Bacteroidota</taxon>
        <taxon>Flavobacteriia</taxon>
        <taxon>Flavobacteriales</taxon>
        <taxon>Flavobacteriaceae</taxon>
        <taxon>Flavobacterium</taxon>
    </lineage>
</organism>
<protein>
    <recommendedName>
        <fullName evidence="1">Succinate--CoA ligase [ADP-forming] subunit beta</fullName>
        <ecNumber evidence="1">6.2.1.5</ecNumber>
    </recommendedName>
    <alternativeName>
        <fullName evidence="1">Succinyl-CoA synthetase subunit beta</fullName>
        <shortName evidence="1">SCS-beta</shortName>
    </alternativeName>
</protein>
<gene>
    <name evidence="1" type="primary">sucC</name>
    <name type="ordered locus">Fjoh_2162</name>
</gene>
<keyword id="KW-0067">ATP-binding</keyword>
<keyword id="KW-0436">Ligase</keyword>
<keyword id="KW-0460">Magnesium</keyword>
<keyword id="KW-0479">Metal-binding</keyword>
<keyword id="KW-0547">Nucleotide-binding</keyword>
<keyword id="KW-0816">Tricarboxylic acid cycle</keyword>
<sequence>MNIHEYQGKEILASYGVRVQRGIVANNAVEAVAAAKQLTAETGTGWHVIKAQIHAGGRGKGGGVKLAKNLQQVEELAEQIIGMQLITPQTPPEGKKVNKVLVAEDVYYPGESETSEFYVSVLLNRGTGRNMIMYSTEGGMDIEEVAEHTPHLIFTEEIDPTVGLQGFQARRIAFNLGLSGNAFKEMVKFIDALYNAYIGSDASMFEINPVLKTSDNKILAVDAKVNIDDNALYRQPKYAEMRDIREENPIEVEAKEVGLNYVDLDGTVGCMVNGAGLAMATMDLIKYAGFEPANFLDVGGTADAKRVETAFRIILKDPNVKAILINIFGGIVRCDRVAQGVVDAYKNMGDAIKVPIIVRLQGTNAEIAKELIDNSGMPILSAVQFQEAADQVKAALS</sequence>